<organism>
    <name type="scientific">Nostoc sp. (strain PCC 7120 / SAG 25.82 / UTEX 2576)</name>
    <dbReference type="NCBI Taxonomy" id="103690"/>
    <lineage>
        <taxon>Bacteria</taxon>
        <taxon>Bacillati</taxon>
        <taxon>Cyanobacteriota</taxon>
        <taxon>Cyanophyceae</taxon>
        <taxon>Nostocales</taxon>
        <taxon>Nostocaceae</taxon>
        <taxon>Nostoc</taxon>
    </lineage>
</organism>
<name>Y459_NOSS1</name>
<reference key="1">
    <citation type="journal article" date="2001" name="DNA Res.">
        <title>Complete genomic sequence of the filamentous nitrogen-fixing cyanobacterium Anabaena sp. strain PCC 7120.</title>
        <authorList>
            <person name="Kaneko T."/>
            <person name="Nakamura Y."/>
            <person name="Wolk C.P."/>
            <person name="Kuritz T."/>
            <person name="Sasamoto S."/>
            <person name="Watanabe A."/>
            <person name="Iriguchi M."/>
            <person name="Ishikawa A."/>
            <person name="Kawashima K."/>
            <person name="Kimura T."/>
            <person name="Kishida Y."/>
            <person name="Kohara M."/>
            <person name="Matsumoto M."/>
            <person name="Matsuno A."/>
            <person name="Muraki A."/>
            <person name="Nakazaki N."/>
            <person name="Shimpo S."/>
            <person name="Sugimoto M."/>
            <person name="Takazawa M."/>
            <person name="Yamada M."/>
            <person name="Yasuda M."/>
            <person name="Tabata S."/>
        </authorList>
    </citation>
    <scope>NUCLEOTIDE SEQUENCE [LARGE SCALE GENOMIC DNA]</scope>
    <source>
        <strain>PCC 7120 / SAG 25.82 / UTEX 2576</strain>
    </source>
</reference>
<sequence>MKIFSVALSMLRPVRFLIVAFTCALLFLSSTVPAFAISSYQSEPTEATDQLLETQKATDEVARSAPLGLKEVQKKSNEGLNEVQGAADINKQKRPANSQDSSSVEGDIQNFLEKVTGKN</sequence>
<dbReference type="EMBL" id="BA000019">
    <property type="protein sequence ID" value="BAB72417.1"/>
    <property type="molecule type" value="Genomic_DNA"/>
</dbReference>
<dbReference type="PIR" id="AB1864">
    <property type="entry name" value="AB1864"/>
</dbReference>
<dbReference type="RefSeq" id="WP_010994635.1">
    <property type="nucleotide sequence ID" value="NZ_RSCN01000024.1"/>
</dbReference>
<dbReference type="STRING" id="103690.gene:10492468"/>
<dbReference type="KEGG" id="ana:all0459"/>
<dbReference type="eggNOG" id="ENOG50330HD">
    <property type="taxonomic scope" value="Bacteria"/>
</dbReference>
<dbReference type="OrthoDB" id="460499at2"/>
<dbReference type="Proteomes" id="UP000002483">
    <property type="component" value="Chromosome"/>
</dbReference>
<accession>P58574</accession>
<proteinExistence type="predicted"/>
<gene>
    <name type="ordered locus">all0459</name>
</gene>
<protein>
    <recommendedName>
        <fullName>Uncharacterized low temperature-induced protein all0459</fullName>
    </recommendedName>
</protein>
<keyword id="KW-1185">Reference proteome</keyword>
<evidence type="ECO:0000256" key="1">
    <source>
        <dbReference type="SAM" id="MobiDB-lite"/>
    </source>
</evidence>
<feature type="chain" id="PRO_0000208888" description="Uncharacterized low temperature-induced protein all0459">
    <location>
        <begin position="1"/>
        <end position="119"/>
    </location>
</feature>
<feature type="region of interest" description="Disordered" evidence="1">
    <location>
        <begin position="64"/>
        <end position="119"/>
    </location>
</feature>
<feature type="compositionally biased region" description="Polar residues" evidence="1">
    <location>
        <begin position="95"/>
        <end position="104"/>
    </location>
</feature>